<sequence>MTEKTNGVKSSPANNHNHHAPPAIKANGKDDHRTSSRPHSAADDDTSSELQRLADVDAPQQGRSGFRRIVRLVGIIREWANKNFREEEPRPDSFLERFRGPELQTVTTQEGDGKGDKDGEDKGTKKKFELFVLDPAGDWYYCWLFVIAMPVLYNWCLLVARACFSDLQKGYYLVWLVLDYVSDVVYIADLFIRLRTGFLEQGLLVKDTKKLRDNYIHTLQFKLDVASIIPTDLIYFAVDIHSPEVRFNRLLHFARMFEFFDRTETRTNYPNIFRISNLVLYILVIIHWNACIYYAISKSIGFGVDTWVYPNITDPEYGYLAREYIYCLYWSTLTLTTIGETPPPVKDEEYLFVIFDFLIGVLIFATIVGNVGSMISNMNATRAEFQAKIDAVKHYMQFRKVSKGMEAKVIRWFDYLWTNKKTVDEREILKNLPAKLRAEIAINVHLSTLKKVRIFHDCEAGLLVELVLKLRPQVFSPGDYICRKGDIGKEMYIIKEGKLAVVADDGVTQYALLSAGSCFGEISILNIKGSKMGNRRTANIRSLGYSDLFCLSKDDLMEAVTEYPDAKKVLEERGREILMKEGLLDENEVATSMEVDVQEKLGQLETNMETLYTRFGRLLAEYTGAQQKLKQRITVLETKMKQNNEDDYLSDGMNSPELAAADEP</sequence>
<dbReference type="EMBL" id="BC126302">
    <property type="protein sequence ID" value="AAI26303.1"/>
    <property type="molecule type" value="mRNA"/>
</dbReference>
<dbReference type="EMBL" id="BC126304">
    <property type="protein sequence ID" value="AAI26305.1"/>
    <property type="molecule type" value="mRNA"/>
</dbReference>
<dbReference type="EMBL" id="S76067">
    <property type="protein sequence ID" value="AAD14207.1"/>
    <property type="molecule type" value="Genomic_DNA"/>
</dbReference>
<dbReference type="CCDS" id="CCDS14701.1"/>
<dbReference type="PIR" id="I78559">
    <property type="entry name" value="I78559"/>
</dbReference>
<dbReference type="RefSeq" id="NP_005131.1">
    <property type="nucleotide sequence ID" value="NM_005140.3"/>
</dbReference>
<dbReference type="SMR" id="Q16280"/>
<dbReference type="FunCoup" id="Q16280">
    <property type="interactions" value="628"/>
</dbReference>
<dbReference type="STRING" id="9606.ENSP00000328478"/>
<dbReference type="DrugBank" id="DB04209">
    <property type="generic name" value="Dequalinium"/>
</dbReference>
<dbReference type="DrugCentral" id="Q16280"/>
<dbReference type="GuidetoPHARMACOLOGY" id="395"/>
<dbReference type="GlyCosmos" id="Q16280">
    <property type="glycosylation" value="1 site, No reported glycans"/>
</dbReference>
<dbReference type="GlyGen" id="Q16280">
    <property type="glycosylation" value="1 site, 1 O-linked glycan (1 site)"/>
</dbReference>
<dbReference type="iPTMnet" id="Q16280"/>
<dbReference type="PhosphoSitePlus" id="Q16280"/>
<dbReference type="BioMuta" id="CNGA2"/>
<dbReference type="DMDM" id="119370323"/>
<dbReference type="MassIVE" id="Q16280"/>
<dbReference type="PaxDb" id="9606-ENSP00000328478"/>
<dbReference type="PeptideAtlas" id="Q16280"/>
<dbReference type="ProteomicsDB" id="60847"/>
<dbReference type="Antibodypedia" id="17043">
    <property type="antibodies" value="257 antibodies from 31 providers"/>
</dbReference>
<dbReference type="DNASU" id="1260"/>
<dbReference type="Ensembl" id="ENST00000329903.5">
    <property type="protein sequence ID" value="ENSP00000328478.4"/>
    <property type="gene ID" value="ENSG00000183862.6"/>
</dbReference>
<dbReference type="GeneID" id="1260"/>
<dbReference type="KEGG" id="hsa:1260"/>
<dbReference type="MANE-Select" id="ENST00000329903.5">
    <property type="protein sequence ID" value="ENSP00000328478.4"/>
    <property type="RefSeq nucleotide sequence ID" value="NM_005140.3"/>
    <property type="RefSeq protein sequence ID" value="NP_005131.1"/>
</dbReference>
<dbReference type="UCSC" id="uc065bqd.1">
    <property type="organism name" value="human"/>
</dbReference>
<dbReference type="AGR" id="HGNC:2149"/>
<dbReference type="CTD" id="1260"/>
<dbReference type="DisGeNET" id="1260"/>
<dbReference type="GeneCards" id="CNGA2"/>
<dbReference type="HGNC" id="HGNC:2149">
    <property type="gene designation" value="CNGA2"/>
</dbReference>
<dbReference type="HPA" id="ENSG00000183862">
    <property type="expression patterns" value="Not detected"/>
</dbReference>
<dbReference type="MalaCards" id="CNGA2"/>
<dbReference type="MIM" id="300338">
    <property type="type" value="gene"/>
</dbReference>
<dbReference type="neXtProt" id="NX_Q16280"/>
<dbReference type="OpenTargets" id="ENSG00000183862"/>
<dbReference type="Orphanet" id="88620">
    <property type="disease" value="Isolated congenital anosmia"/>
</dbReference>
<dbReference type="PharmGKB" id="PA26659"/>
<dbReference type="VEuPathDB" id="HostDB:ENSG00000183862"/>
<dbReference type="eggNOG" id="KOG0500">
    <property type="taxonomic scope" value="Eukaryota"/>
</dbReference>
<dbReference type="GeneTree" id="ENSGT00940000155374"/>
<dbReference type="HOGENOM" id="CLU_005746_12_0_1"/>
<dbReference type="InParanoid" id="Q16280"/>
<dbReference type="OMA" id="DWYYHWL"/>
<dbReference type="OrthoDB" id="421226at2759"/>
<dbReference type="PAN-GO" id="Q16280">
    <property type="GO annotations" value="7 GO annotations based on evolutionary models"/>
</dbReference>
<dbReference type="PhylomeDB" id="Q16280"/>
<dbReference type="TreeFam" id="TF319048"/>
<dbReference type="PathwayCommons" id="Q16280"/>
<dbReference type="Reactome" id="R-HSA-381753">
    <property type="pathway name" value="Olfactory Signaling Pathway"/>
</dbReference>
<dbReference type="Reactome" id="R-HSA-5620916">
    <property type="pathway name" value="VxPx cargo-targeting to cilium"/>
</dbReference>
<dbReference type="SignaLink" id="Q16280"/>
<dbReference type="BioGRID-ORCS" id="1260">
    <property type="hits" value="11 hits in 762 CRISPR screens"/>
</dbReference>
<dbReference type="GeneWiki" id="Cyclic_nucleotide-gated_channel_alpha_2"/>
<dbReference type="GenomeRNAi" id="1260"/>
<dbReference type="Pharos" id="Q16280">
    <property type="development level" value="Tchem"/>
</dbReference>
<dbReference type="PRO" id="PR:Q16280"/>
<dbReference type="Proteomes" id="UP000005640">
    <property type="component" value="Chromosome X"/>
</dbReference>
<dbReference type="RNAct" id="Q16280">
    <property type="molecule type" value="protein"/>
</dbReference>
<dbReference type="Bgee" id="ENSG00000183862">
    <property type="expression patterns" value="Expressed in testis and 1 other cell type or tissue"/>
</dbReference>
<dbReference type="GO" id="GO:0060170">
    <property type="term" value="C:ciliary membrane"/>
    <property type="evidence" value="ECO:0000250"/>
    <property type="project" value="ARUK-UCL"/>
</dbReference>
<dbReference type="GO" id="GO:0030660">
    <property type="term" value="C:Golgi-associated vesicle membrane"/>
    <property type="evidence" value="ECO:0000304"/>
    <property type="project" value="Reactome"/>
</dbReference>
<dbReference type="GO" id="GO:0017071">
    <property type="term" value="C:intracellular cyclic nucleotide activated cation channel complex"/>
    <property type="evidence" value="ECO:0000318"/>
    <property type="project" value="GO_Central"/>
</dbReference>
<dbReference type="GO" id="GO:0098804">
    <property type="term" value="C:non-motile cilium membrane"/>
    <property type="evidence" value="ECO:0000250"/>
    <property type="project" value="UniProtKB"/>
</dbReference>
<dbReference type="GO" id="GO:0005886">
    <property type="term" value="C:plasma membrane"/>
    <property type="evidence" value="ECO:0000318"/>
    <property type="project" value="GO_Central"/>
</dbReference>
<dbReference type="GO" id="GO:0005262">
    <property type="term" value="F:calcium channel activity"/>
    <property type="evidence" value="ECO:0007669"/>
    <property type="project" value="UniProtKB-KW"/>
</dbReference>
<dbReference type="GO" id="GO:0005516">
    <property type="term" value="F:calmodulin binding"/>
    <property type="evidence" value="ECO:0007669"/>
    <property type="project" value="UniProtKB-KW"/>
</dbReference>
<dbReference type="GO" id="GO:0030552">
    <property type="term" value="F:cAMP binding"/>
    <property type="evidence" value="ECO:0007669"/>
    <property type="project" value="UniProtKB-KW"/>
</dbReference>
<dbReference type="GO" id="GO:0030553">
    <property type="term" value="F:cGMP binding"/>
    <property type="evidence" value="ECO:0000318"/>
    <property type="project" value="GO_Central"/>
</dbReference>
<dbReference type="GO" id="GO:0005222">
    <property type="term" value="F:intracellularly cAMP-activated cation channel activity"/>
    <property type="evidence" value="ECO:0000318"/>
    <property type="project" value="GO_Central"/>
</dbReference>
<dbReference type="GO" id="GO:0005223">
    <property type="term" value="F:intracellularly cGMP-activated cation channel activity"/>
    <property type="evidence" value="ECO:0000318"/>
    <property type="project" value="GO_Central"/>
</dbReference>
<dbReference type="GO" id="GO:0044877">
    <property type="term" value="F:protein-containing complex binding"/>
    <property type="evidence" value="ECO:0000318"/>
    <property type="project" value="GO_Central"/>
</dbReference>
<dbReference type="GO" id="GO:0006816">
    <property type="term" value="P:calcium ion transport"/>
    <property type="evidence" value="ECO:0000250"/>
    <property type="project" value="UniProtKB"/>
</dbReference>
<dbReference type="GO" id="GO:0098655">
    <property type="term" value="P:monoatomic cation transmembrane transport"/>
    <property type="evidence" value="ECO:0000318"/>
    <property type="project" value="GO_Central"/>
</dbReference>
<dbReference type="GO" id="GO:0006813">
    <property type="term" value="P:potassium ion transport"/>
    <property type="evidence" value="ECO:0000250"/>
    <property type="project" value="UniProtKB"/>
</dbReference>
<dbReference type="GO" id="GO:0007608">
    <property type="term" value="P:sensory perception of smell"/>
    <property type="evidence" value="ECO:0007669"/>
    <property type="project" value="UniProtKB-KW"/>
</dbReference>
<dbReference type="GO" id="GO:0006814">
    <property type="term" value="P:sodium ion transport"/>
    <property type="evidence" value="ECO:0000250"/>
    <property type="project" value="UniProtKB"/>
</dbReference>
<dbReference type="CDD" id="cd00038">
    <property type="entry name" value="CAP_ED"/>
    <property type="match status" value="1"/>
</dbReference>
<dbReference type="FunFam" id="2.60.120.10:FF:000002">
    <property type="entry name" value="Cyclic nucleotide gated channel alpha 1a"/>
    <property type="match status" value="1"/>
</dbReference>
<dbReference type="FunFam" id="1.10.287.630:FF:000001">
    <property type="entry name" value="Cyclic nucleotide-gated channel alpha 3"/>
    <property type="match status" value="1"/>
</dbReference>
<dbReference type="FunFam" id="1.10.287.70:FF:000030">
    <property type="entry name" value="Cyclic nucleotide-gated channel alpha 3"/>
    <property type="match status" value="1"/>
</dbReference>
<dbReference type="FunFam" id="1.20.5.300:FF:000002">
    <property type="entry name" value="Cyclic nucleotide-gated channel alpha 3"/>
    <property type="match status" value="1"/>
</dbReference>
<dbReference type="Gene3D" id="1.10.287.70">
    <property type="match status" value="1"/>
</dbReference>
<dbReference type="Gene3D" id="1.20.5.300">
    <property type="match status" value="1"/>
</dbReference>
<dbReference type="Gene3D" id="1.10.287.630">
    <property type="entry name" value="Helix hairpin bin"/>
    <property type="match status" value="1"/>
</dbReference>
<dbReference type="Gene3D" id="2.60.120.10">
    <property type="entry name" value="Jelly Rolls"/>
    <property type="match status" value="1"/>
</dbReference>
<dbReference type="InterPro" id="IPR032406">
    <property type="entry name" value="CLZ_dom"/>
</dbReference>
<dbReference type="InterPro" id="IPR050866">
    <property type="entry name" value="CNG_cation_channel"/>
</dbReference>
<dbReference type="InterPro" id="IPR018488">
    <property type="entry name" value="cNMP-bd_CS"/>
</dbReference>
<dbReference type="InterPro" id="IPR000595">
    <property type="entry name" value="cNMP-bd_dom"/>
</dbReference>
<dbReference type="InterPro" id="IPR018490">
    <property type="entry name" value="cNMP-bd_dom_sf"/>
</dbReference>
<dbReference type="InterPro" id="IPR005821">
    <property type="entry name" value="Ion_trans_dom"/>
</dbReference>
<dbReference type="InterPro" id="IPR014710">
    <property type="entry name" value="RmlC-like_jellyroll"/>
</dbReference>
<dbReference type="PANTHER" id="PTHR45638">
    <property type="entry name" value="CYCLIC NUCLEOTIDE-GATED CATION CHANNEL SUBUNIT A"/>
    <property type="match status" value="1"/>
</dbReference>
<dbReference type="PANTHER" id="PTHR45638:SF3">
    <property type="entry name" value="CYCLIC NUCLEOTIDE-GATED OLFACTORY CHANNEL"/>
    <property type="match status" value="1"/>
</dbReference>
<dbReference type="Pfam" id="PF16526">
    <property type="entry name" value="CLZ"/>
    <property type="match status" value="1"/>
</dbReference>
<dbReference type="Pfam" id="PF00027">
    <property type="entry name" value="cNMP_binding"/>
    <property type="match status" value="1"/>
</dbReference>
<dbReference type="Pfam" id="PF00520">
    <property type="entry name" value="Ion_trans"/>
    <property type="match status" value="1"/>
</dbReference>
<dbReference type="SMART" id="SM00100">
    <property type="entry name" value="cNMP"/>
    <property type="match status" value="1"/>
</dbReference>
<dbReference type="SUPFAM" id="SSF51206">
    <property type="entry name" value="cAMP-binding domain-like"/>
    <property type="match status" value="1"/>
</dbReference>
<dbReference type="SUPFAM" id="SSF81324">
    <property type="entry name" value="Voltage-gated potassium channels"/>
    <property type="match status" value="1"/>
</dbReference>
<dbReference type="PROSITE" id="PS00888">
    <property type="entry name" value="CNMP_BINDING_1"/>
    <property type="match status" value="1"/>
</dbReference>
<dbReference type="PROSITE" id="PS00889">
    <property type="entry name" value="CNMP_BINDING_2"/>
    <property type="match status" value="1"/>
</dbReference>
<dbReference type="PROSITE" id="PS50042">
    <property type="entry name" value="CNMP_BINDING_3"/>
    <property type="match status" value="1"/>
</dbReference>
<gene>
    <name evidence="8 10" type="primary">CNGA2</name>
    <name type="synonym">CNCA</name>
    <name type="synonym">CNCA1</name>
    <name type="synonym">CNCG2</name>
</gene>
<comment type="function">
    <text evidence="4">Pore-forming subunit of the olfactory cyclic nucleotide-gated channel. Operates in the cilia of olfactory sensory neurons where chemical stimulation of the odorant is converted to an electrical signal. Mediates odorant-induced cAMP-dependent Ca(2+) influx triggering neuron depolarization. The rise of intracellular Ca(2+) levels potentiates the olfactory response by activating Ca(2+)-dependent Cl(-) channels, but it also serves as a negative feedback signal to desensitize the channel for rapid adaptation to odorants. Conducts cAMP- and cGMP-gated ion currents, with permeability for monovalent and divalent cations.</text>
</comment>
<comment type="catalytic activity">
    <reaction evidence="4">
        <text>Ca(2+)(in) = Ca(2+)(out)</text>
        <dbReference type="Rhea" id="RHEA:29671"/>
        <dbReference type="ChEBI" id="CHEBI:29108"/>
    </reaction>
</comment>
<comment type="catalytic activity">
    <reaction evidence="4">
        <text>Na(+)(in) = Na(+)(out)</text>
        <dbReference type="Rhea" id="RHEA:34963"/>
        <dbReference type="ChEBI" id="CHEBI:29101"/>
    </reaction>
</comment>
<comment type="catalytic activity">
    <reaction evidence="4">
        <text>K(+)(in) = K(+)(out)</text>
        <dbReference type="Rhea" id="RHEA:29463"/>
        <dbReference type="ChEBI" id="CHEBI:29103"/>
    </reaction>
</comment>
<comment type="catalytic activity">
    <reaction evidence="3">
        <text>NH4(+)(in) = NH4(+)(out)</text>
        <dbReference type="Rhea" id="RHEA:28747"/>
        <dbReference type="ChEBI" id="CHEBI:28938"/>
    </reaction>
</comment>
<comment type="catalytic activity">
    <reaction evidence="3">
        <text>Rb(+)(in) = Rb(+)(out)</text>
        <dbReference type="Rhea" id="RHEA:78547"/>
        <dbReference type="ChEBI" id="CHEBI:49847"/>
    </reaction>
</comment>
<comment type="catalytic activity">
    <reaction evidence="3">
        <text>Li(+)(in) = Li(+)(out)</text>
        <dbReference type="Rhea" id="RHEA:78551"/>
        <dbReference type="ChEBI" id="CHEBI:49713"/>
    </reaction>
</comment>
<comment type="catalytic activity">
    <reaction evidence="3">
        <text>Cs(+)(in) = Cs(+)(out)</text>
        <dbReference type="Rhea" id="RHEA:78555"/>
        <dbReference type="ChEBI" id="CHEBI:49547"/>
    </reaction>
</comment>
<comment type="subunit">
    <text evidence="4">The olfactory cyclic nucleotide-gated channel is an heterotetramer composed of CNGA2, CNGA4 and CNGB1b subunits with 2:1:1 stoichiometry.</text>
</comment>
<comment type="subcellular location">
    <subcellularLocation>
        <location evidence="4">Cell projection</location>
        <location evidence="4">Cilium membrane</location>
        <topology evidence="5">Multi-pass membrane protein</topology>
    </subcellularLocation>
</comment>
<comment type="domain">
    <text evidence="1">The C-terminal coiled-coil domain mediates trimerization of CNGA subunits.</text>
</comment>
<comment type="similarity">
    <text evidence="9">Belongs to the cyclic nucleotide-gated cation channel (TC 1.A.1.5) family. CNGA2 subfamily.</text>
</comment>
<name>CNGA2_HUMAN</name>
<accession>Q16280</accession>
<accession>A0AVD0</accession>
<feature type="chain" id="PRO_0000219312" description="Cyclic nucleotide-gated channel alpha-2">
    <location>
        <begin position="1"/>
        <end position="664"/>
    </location>
</feature>
<feature type="topological domain" description="Cytoplasmic" evidence="9">
    <location>
        <begin position="1"/>
        <end position="144"/>
    </location>
</feature>
<feature type="transmembrane region" description="Helical; Name=S1" evidence="2">
    <location>
        <begin position="145"/>
        <end position="166"/>
    </location>
</feature>
<feature type="topological domain" description="Extracellular" evidence="9">
    <location>
        <begin position="167"/>
        <end position="176"/>
    </location>
</feature>
<feature type="transmembrane region" description="Helical; Name=S2" evidence="2">
    <location>
        <begin position="177"/>
        <end position="197"/>
    </location>
</feature>
<feature type="topological domain" description="Cytoplasmic" evidence="9">
    <location>
        <begin position="198"/>
        <end position="222"/>
    </location>
</feature>
<feature type="transmembrane region" description="Helical; Name=S3" evidence="2">
    <location>
        <begin position="223"/>
        <end position="241"/>
    </location>
</feature>
<feature type="topological domain" description="Extracellular" evidence="9">
    <location>
        <begin position="242"/>
        <end position="246"/>
    </location>
</feature>
<feature type="transmembrane region" description="Helical; Name=S4" evidence="2">
    <location>
        <begin position="247"/>
        <end position="265"/>
    </location>
</feature>
<feature type="topological domain" description="Cytoplasmic" evidence="9">
    <location>
        <begin position="266"/>
        <end position="272"/>
    </location>
</feature>
<feature type="transmembrane region" description="Helical; Name=S5" evidence="2">
    <location>
        <begin position="273"/>
        <end position="296"/>
    </location>
</feature>
<feature type="topological domain" description="Extracellular" evidence="9">
    <location>
        <begin position="297"/>
        <end position="319"/>
    </location>
</feature>
<feature type="transmembrane region" description="Helical; Name=P-helix" evidence="2">
    <location>
        <begin position="320"/>
        <end position="354"/>
    </location>
</feature>
<feature type="transmembrane region" description="Helical; Name=S6" evidence="2">
    <location>
        <begin position="355"/>
        <end position="379"/>
    </location>
</feature>
<feature type="topological domain" description="Cytoplasmic" evidence="9">
    <location>
        <begin position="380"/>
        <end position="664"/>
    </location>
</feature>
<feature type="region of interest" description="Disordered" evidence="6">
    <location>
        <begin position="1"/>
        <end position="49"/>
    </location>
</feature>
<feature type="region of interest" description="Ion conduction pathway" evidence="2">
    <location>
        <begin position="270"/>
        <end position="378"/>
    </location>
</feature>
<feature type="region of interest" description="Selectivity filter" evidence="2">
    <location>
        <begin position="337"/>
        <end position="340"/>
    </location>
</feature>
<feature type="region of interest" description="C-linker" evidence="2">
    <location>
        <begin position="380"/>
        <end position="456"/>
    </location>
</feature>
<feature type="region of interest" description="Cyclic nucleotide-binding domain" evidence="2">
    <location>
        <begin position="460"/>
        <end position="580"/>
    </location>
</feature>
<feature type="region of interest" description="Disordered" evidence="6">
    <location>
        <begin position="641"/>
        <end position="664"/>
    </location>
</feature>
<feature type="coiled-coil region" evidence="2">
    <location>
        <begin position="597"/>
        <end position="651"/>
    </location>
</feature>
<feature type="compositionally biased region" description="Polar residues" evidence="6">
    <location>
        <begin position="1"/>
        <end position="11"/>
    </location>
</feature>
<feature type="compositionally biased region" description="Low complexity" evidence="6">
    <location>
        <begin position="12"/>
        <end position="23"/>
    </location>
</feature>
<feature type="binding site" evidence="2">
    <location>
        <position position="520"/>
    </location>
    <ligand>
        <name>3',5'-cyclic GMP</name>
        <dbReference type="ChEBI" id="CHEBI:57746"/>
    </ligand>
</feature>
<feature type="binding site" evidence="2">
    <location>
        <position position="523"/>
    </location>
    <ligand>
        <name>3',5'-cyclic GMP</name>
        <dbReference type="ChEBI" id="CHEBI:57746"/>
    </ligand>
</feature>
<feature type="binding site" evidence="2">
    <location>
        <position position="536"/>
    </location>
    <ligand>
        <name>3',5'-cyclic AMP</name>
        <dbReference type="ChEBI" id="CHEBI:58165"/>
    </ligand>
</feature>
<feature type="binding site" evidence="2">
    <location>
        <position position="536"/>
    </location>
    <ligand>
        <name>3',5'-cyclic GMP</name>
        <dbReference type="ChEBI" id="CHEBI:57746"/>
    </ligand>
</feature>
<feature type="binding site" evidence="2">
    <location>
        <position position="537"/>
    </location>
    <ligand>
        <name>3',5'-cyclic AMP</name>
        <dbReference type="ChEBI" id="CHEBI:58165"/>
    </ligand>
</feature>
<feature type="binding site" evidence="2">
    <location>
        <position position="537"/>
    </location>
    <ligand>
        <name>3',5'-cyclic GMP</name>
        <dbReference type="ChEBI" id="CHEBI:57746"/>
    </ligand>
</feature>
<feature type="site" description="Central gate" evidence="2">
    <location>
        <position position="364"/>
    </location>
</feature>
<feature type="site" description="Central gate" evidence="2">
    <location>
        <position position="368"/>
    </location>
</feature>
<feature type="sequence variant" id="VAR_036603" description="In a breast cancer sample; somatic mutation; dbSNP:rs561786347." evidence="7">
    <original>R</original>
    <variation>H</variation>
    <location>
        <position position="97"/>
    </location>
</feature>
<feature type="sequence variant" id="VAR_048748" description="In dbSNP:rs6627455.">
    <original>D</original>
    <variation>H</variation>
    <location>
        <position position="118"/>
    </location>
</feature>
<feature type="sequence variant" id="VAR_061107" description="In dbSNP:rs35350051.">
    <original>W</original>
    <variation>L</variation>
    <location>
        <position position="139"/>
    </location>
</feature>
<feature type="sequence variant" id="VAR_036604" description="In a breast cancer sample; somatic mutation; dbSNP:rs150539917." evidence="7">
    <original>R</original>
    <variation>Q</variation>
    <location>
        <position position="399"/>
    </location>
</feature>
<feature type="sequence variant" id="VAR_048749" description="In dbSNP:rs714147.">
    <original>E</original>
    <variation>K</variation>
    <location>
        <position position="663"/>
    </location>
</feature>
<proteinExistence type="evidence at transcript level"/>
<evidence type="ECO:0000250" key="1"/>
<evidence type="ECO:0000250" key="2">
    <source>
        <dbReference type="UniProtKB" id="P29973"/>
    </source>
</evidence>
<evidence type="ECO:0000250" key="3">
    <source>
        <dbReference type="UniProtKB" id="Q00194"/>
    </source>
</evidence>
<evidence type="ECO:0000250" key="4">
    <source>
        <dbReference type="UniProtKB" id="Q00195"/>
    </source>
</evidence>
<evidence type="ECO:0000255" key="5"/>
<evidence type="ECO:0000256" key="6">
    <source>
        <dbReference type="SAM" id="MobiDB-lite"/>
    </source>
</evidence>
<evidence type="ECO:0000269" key="7">
    <source>
    </source>
</evidence>
<evidence type="ECO:0000303" key="8">
    <source>
    </source>
</evidence>
<evidence type="ECO:0000305" key="9"/>
<evidence type="ECO:0000312" key="10">
    <source>
        <dbReference type="HGNC" id="HGNC:2149"/>
    </source>
</evidence>
<reference key="1">
    <citation type="journal article" date="2004" name="Genome Res.">
        <title>The status, quality, and expansion of the NIH full-length cDNA project: the Mammalian Gene Collection (MGC).</title>
        <authorList>
            <consortium name="The MGC Project Team"/>
        </authorList>
    </citation>
    <scope>NUCLEOTIDE SEQUENCE [LARGE SCALE MRNA]</scope>
</reference>
<reference key="2">
    <citation type="journal article" date="1994" name="Neuropharmacology">
        <title>Expression of cyclic nucleotide-gated cation channels in non-sensory tissues and cells.</title>
        <authorList>
            <person name="Distler M."/>
            <person name="Biel M."/>
            <person name="Flockerzi V."/>
            <person name="Hofmann F."/>
        </authorList>
    </citation>
    <scope>NUCLEOTIDE SEQUENCE [GENOMIC DNA] OF 292-552</scope>
</reference>
<reference key="3">
    <citation type="journal article" date="2001" name="Science">
        <title>Nomenclature for ion channel subunits.</title>
        <authorList>
            <person name="Bradley J."/>
            <person name="Frings S."/>
            <person name="Yau K.W."/>
            <person name="Reed R."/>
        </authorList>
    </citation>
    <scope>NOMENCLATURE</scope>
</reference>
<reference key="4">
    <citation type="journal article" date="2006" name="Science">
        <title>The consensus coding sequences of human breast and colorectal cancers.</title>
        <authorList>
            <person name="Sjoeblom T."/>
            <person name="Jones S."/>
            <person name="Wood L.D."/>
            <person name="Parsons D.W."/>
            <person name="Lin J."/>
            <person name="Barber T.D."/>
            <person name="Mandelker D."/>
            <person name="Leary R.J."/>
            <person name="Ptak J."/>
            <person name="Silliman N."/>
            <person name="Szabo S."/>
            <person name="Buckhaults P."/>
            <person name="Farrell C."/>
            <person name="Meeh P."/>
            <person name="Markowitz S.D."/>
            <person name="Willis J."/>
            <person name="Dawson D."/>
            <person name="Willson J.K.V."/>
            <person name="Gazdar A.F."/>
            <person name="Hartigan J."/>
            <person name="Wu L."/>
            <person name="Liu C."/>
            <person name="Parmigiani G."/>
            <person name="Park B.H."/>
            <person name="Bachman K.E."/>
            <person name="Papadopoulos N."/>
            <person name="Vogelstein B."/>
            <person name="Kinzler K.W."/>
            <person name="Velculescu V.E."/>
        </authorList>
    </citation>
    <scope>VARIANTS HIS-97 AND GLN-399</scope>
</reference>
<keyword id="KW-0106">Calcium</keyword>
<keyword id="KW-0107">Calcium channel</keyword>
<keyword id="KW-0109">Calcium transport</keyword>
<keyword id="KW-0112">Calmodulin-binding</keyword>
<keyword id="KW-0114">cAMP</keyword>
<keyword id="KW-0116">cAMP-binding</keyword>
<keyword id="KW-1003">Cell membrane</keyword>
<keyword id="KW-0966">Cell projection</keyword>
<keyword id="KW-0140">cGMP</keyword>
<keyword id="KW-0142">cGMP-binding</keyword>
<keyword id="KW-0175">Coiled coil</keyword>
<keyword id="KW-0407">Ion channel</keyword>
<keyword id="KW-0406">Ion transport</keyword>
<keyword id="KW-1071">Ligand-gated ion channel</keyword>
<keyword id="KW-0472">Membrane</keyword>
<keyword id="KW-0547">Nucleotide-binding</keyword>
<keyword id="KW-0552">Olfaction</keyword>
<keyword id="KW-1185">Reference proteome</keyword>
<keyword id="KW-0716">Sensory transduction</keyword>
<keyword id="KW-0812">Transmembrane</keyword>
<keyword id="KW-1133">Transmembrane helix</keyword>
<keyword id="KW-0813">Transport</keyword>
<organism>
    <name type="scientific">Homo sapiens</name>
    <name type="common">Human</name>
    <dbReference type="NCBI Taxonomy" id="9606"/>
    <lineage>
        <taxon>Eukaryota</taxon>
        <taxon>Metazoa</taxon>
        <taxon>Chordata</taxon>
        <taxon>Craniata</taxon>
        <taxon>Vertebrata</taxon>
        <taxon>Euteleostomi</taxon>
        <taxon>Mammalia</taxon>
        <taxon>Eutheria</taxon>
        <taxon>Euarchontoglires</taxon>
        <taxon>Primates</taxon>
        <taxon>Haplorrhini</taxon>
        <taxon>Catarrhini</taxon>
        <taxon>Hominidae</taxon>
        <taxon>Homo</taxon>
    </lineage>
</organism>
<protein>
    <recommendedName>
        <fullName>Cyclic nucleotide-gated channel alpha-2</fullName>
        <shortName>CNG channel alpha-2</shortName>
        <shortName>CNG-2</shortName>
        <shortName evidence="8">CNG2</shortName>
    </recommendedName>
    <alternativeName>
        <fullName>Olfactory cyclic nucleotide-gated channel subunit 1</fullName>
        <shortName evidence="8">OCNC1</shortName>
    </alternativeName>
</protein>